<name>FABH_SOLUE</name>
<organism>
    <name type="scientific">Solibacter usitatus (strain Ellin6076)</name>
    <dbReference type="NCBI Taxonomy" id="234267"/>
    <lineage>
        <taxon>Bacteria</taxon>
        <taxon>Pseudomonadati</taxon>
        <taxon>Acidobacteriota</taxon>
        <taxon>Terriglobia</taxon>
        <taxon>Bryobacterales</taxon>
        <taxon>Solibacteraceae</taxon>
        <taxon>Candidatus Solibacter</taxon>
    </lineage>
</organism>
<feature type="chain" id="PRO_1000187894" description="Beta-ketoacyl-[acyl-carrier-protein] synthase III">
    <location>
        <begin position="1"/>
        <end position="331"/>
    </location>
</feature>
<feature type="region of interest" description="ACP-binding" evidence="1">
    <location>
        <begin position="257"/>
        <end position="261"/>
    </location>
</feature>
<feature type="active site" evidence="1">
    <location>
        <position position="113"/>
    </location>
</feature>
<feature type="active site" evidence="1">
    <location>
        <position position="256"/>
    </location>
</feature>
<feature type="active site" evidence="1">
    <location>
        <position position="286"/>
    </location>
</feature>
<protein>
    <recommendedName>
        <fullName evidence="1">Beta-ketoacyl-[acyl-carrier-protein] synthase III</fullName>
        <shortName evidence="1">Beta-ketoacyl-ACP synthase III</shortName>
        <shortName evidence="1">KAS III</shortName>
        <ecNumber evidence="1">2.3.1.180</ecNumber>
    </recommendedName>
    <alternativeName>
        <fullName evidence="1">3-oxoacyl-[acyl-carrier-protein] synthase 3</fullName>
    </alternativeName>
    <alternativeName>
        <fullName evidence="1">3-oxoacyl-[acyl-carrier-protein] synthase III</fullName>
    </alternativeName>
</protein>
<dbReference type="EC" id="2.3.1.180" evidence="1"/>
<dbReference type="EMBL" id="CP000473">
    <property type="protein sequence ID" value="ABJ87961.1"/>
    <property type="molecule type" value="Genomic_DNA"/>
</dbReference>
<dbReference type="SMR" id="Q01QV9"/>
<dbReference type="FunCoup" id="Q01QV9">
    <property type="interactions" value="580"/>
</dbReference>
<dbReference type="STRING" id="234267.Acid_7048"/>
<dbReference type="KEGG" id="sus:Acid_7048"/>
<dbReference type="eggNOG" id="COG0332">
    <property type="taxonomic scope" value="Bacteria"/>
</dbReference>
<dbReference type="HOGENOM" id="CLU_039592_3_1_0"/>
<dbReference type="InParanoid" id="Q01QV9"/>
<dbReference type="OrthoDB" id="9815506at2"/>
<dbReference type="UniPathway" id="UPA00094"/>
<dbReference type="GO" id="GO:0005737">
    <property type="term" value="C:cytoplasm"/>
    <property type="evidence" value="ECO:0007669"/>
    <property type="project" value="UniProtKB-SubCell"/>
</dbReference>
<dbReference type="GO" id="GO:0004315">
    <property type="term" value="F:3-oxoacyl-[acyl-carrier-protein] synthase activity"/>
    <property type="evidence" value="ECO:0007669"/>
    <property type="project" value="InterPro"/>
</dbReference>
<dbReference type="GO" id="GO:0033818">
    <property type="term" value="F:beta-ketoacyl-acyl-carrier-protein synthase III activity"/>
    <property type="evidence" value="ECO:0007669"/>
    <property type="project" value="UniProtKB-UniRule"/>
</dbReference>
<dbReference type="GO" id="GO:0006633">
    <property type="term" value="P:fatty acid biosynthetic process"/>
    <property type="evidence" value="ECO:0007669"/>
    <property type="project" value="UniProtKB-UniRule"/>
</dbReference>
<dbReference type="GO" id="GO:0044550">
    <property type="term" value="P:secondary metabolite biosynthetic process"/>
    <property type="evidence" value="ECO:0007669"/>
    <property type="project" value="TreeGrafter"/>
</dbReference>
<dbReference type="CDD" id="cd00830">
    <property type="entry name" value="KAS_III"/>
    <property type="match status" value="1"/>
</dbReference>
<dbReference type="FunFam" id="3.40.47.10:FF:000004">
    <property type="entry name" value="3-oxoacyl-[acyl-carrier-protein] synthase 3"/>
    <property type="match status" value="1"/>
</dbReference>
<dbReference type="Gene3D" id="3.40.47.10">
    <property type="match status" value="1"/>
</dbReference>
<dbReference type="HAMAP" id="MF_01815">
    <property type="entry name" value="FabH"/>
    <property type="match status" value="1"/>
</dbReference>
<dbReference type="InterPro" id="IPR013747">
    <property type="entry name" value="ACP_syn_III_C"/>
</dbReference>
<dbReference type="InterPro" id="IPR013751">
    <property type="entry name" value="ACP_syn_III_N"/>
</dbReference>
<dbReference type="InterPro" id="IPR004655">
    <property type="entry name" value="FabH"/>
</dbReference>
<dbReference type="InterPro" id="IPR016039">
    <property type="entry name" value="Thiolase-like"/>
</dbReference>
<dbReference type="NCBIfam" id="TIGR00747">
    <property type="entry name" value="fabH"/>
    <property type="match status" value="1"/>
</dbReference>
<dbReference type="NCBIfam" id="NF006829">
    <property type="entry name" value="PRK09352.1"/>
    <property type="match status" value="1"/>
</dbReference>
<dbReference type="PANTHER" id="PTHR34069">
    <property type="entry name" value="3-OXOACYL-[ACYL-CARRIER-PROTEIN] SYNTHASE 3"/>
    <property type="match status" value="1"/>
</dbReference>
<dbReference type="PANTHER" id="PTHR34069:SF2">
    <property type="entry name" value="BETA-KETOACYL-[ACYL-CARRIER-PROTEIN] SYNTHASE III"/>
    <property type="match status" value="1"/>
</dbReference>
<dbReference type="Pfam" id="PF08545">
    <property type="entry name" value="ACP_syn_III"/>
    <property type="match status" value="1"/>
</dbReference>
<dbReference type="Pfam" id="PF08541">
    <property type="entry name" value="ACP_syn_III_C"/>
    <property type="match status" value="1"/>
</dbReference>
<dbReference type="SUPFAM" id="SSF53901">
    <property type="entry name" value="Thiolase-like"/>
    <property type="match status" value="1"/>
</dbReference>
<sequence length="331" mass="36000">MPKAKISALGCYTPPRVLTNQDLEKLVDTNDQWIMERTGIRERHIAAPEMATSDMAIEAARCALLQRGIDACEIDAIILCTVTPDHLFPSTACLVQNAIGAKGAWGFDLIAACSGFLYGLTTGAHFVMAGTHKKVLVIGSDTMSRIIDYTDRATCVLFGDGAGAMLIEATDEADDGTGFIDFLGEIDGSGGEFLRMPAGGSRRPASHETVDQRMHYVHQEGSQVFKYASRKMYEVCRDLLERNHFKVEDVGLMIPHQANKRIIKAAGDRLGIAPERVMINIERYGNTTAGTLPLATRDAISEGRLKKGDLVLFAAVGAGYTVGASLWRWAF</sequence>
<comment type="function">
    <text evidence="1">Catalyzes the condensation reaction of fatty acid synthesis by the addition to an acyl acceptor of two carbons from malonyl-ACP. Catalyzes the first condensation reaction which initiates fatty acid synthesis and may therefore play a role in governing the total rate of fatty acid production. Possesses both acetoacetyl-ACP synthase and acetyl transacylase activities. Its substrate specificity determines the biosynthesis of branched-chain and/or straight-chain of fatty acids.</text>
</comment>
<comment type="catalytic activity">
    <reaction evidence="1">
        <text>malonyl-[ACP] + acetyl-CoA + H(+) = 3-oxobutanoyl-[ACP] + CO2 + CoA</text>
        <dbReference type="Rhea" id="RHEA:12080"/>
        <dbReference type="Rhea" id="RHEA-COMP:9623"/>
        <dbReference type="Rhea" id="RHEA-COMP:9625"/>
        <dbReference type="ChEBI" id="CHEBI:15378"/>
        <dbReference type="ChEBI" id="CHEBI:16526"/>
        <dbReference type="ChEBI" id="CHEBI:57287"/>
        <dbReference type="ChEBI" id="CHEBI:57288"/>
        <dbReference type="ChEBI" id="CHEBI:78449"/>
        <dbReference type="ChEBI" id="CHEBI:78450"/>
        <dbReference type="EC" id="2.3.1.180"/>
    </reaction>
</comment>
<comment type="pathway">
    <text evidence="1">Lipid metabolism; fatty acid biosynthesis.</text>
</comment>
<comment type="subunit">
    <text evidence="1">Homodimer.</text>
</comment>
<comment type="subcellular location">
    <subcellularLocation>
        <location evidence="1">Cytoplasm</location>
    </subcellularLocation>
</comment>
<comment type="domain">
    <text evidence="1">The last Arg residue of the ACP-binding site is essential for the weak association between ACP/AcpP and FabH.</text>
</comment>
<comment type="similarity">
    <text evidence="1">Belongs to the thiolase-like superfamily. FabH family.</text>
</comment>
<keyword id="KW-0012">Acyltransferase</keyword>
<keyword id="KW-0963">Cytoplasm</keyword>
<keyword id="KW-0275">Fatty acid biosynthesis</keyword>
<keyword id="KW-0276">Fatty acid metabolism</keyword>
<keyword id="KW-0444">Lipid biosynthesis</keyword>
<keyword id="KW-0443">Lipid metabolism</keyword>
<keyword id="KW-0511">Multifunctional enzyme</keyword>
<keyword id="KW-0808">Transferase</keyword>
<accession>Q01QV9</accession>
<evidence type="ECO:0000255" key="1">
    <source>
        <dbReference type="HAMAP-Rule" id="MF_01815"/>
    </source>
</evidence>
<gene>
    <name evidence="1" type="primary">fabH</name>
    <name type="ordered locus">Acid_7048</name>
</gene>
<proteinExistence type="inferred from homology"/>
<reference key="1">
    <citation type="journal article" date="2009" name="Appl. Environ. Microbiol.">
        <title>Three genomes from the phylum Acidobacteria provide insight into the lifestyles of these microorganisms in soils.</title>
        <authorList>
            <person name="Ward N.L."/>
            <person name="Challacombe J.F."/>
            <person name="Janssen P.H."/>
            <person name="Henrissat B."/>
            <person name="Coutinho P.M."/>
            <person name="Wu M."/>
            <person name="Xie G."/>
            <person name="Haft D.H."/>
            <person name="Sait M."/>
            <person name="Badger J."/>
            <person name="Barabote R.D."/>
            <person name="Bradley B."/>
            <person name="Brettin T.S."/>
            <person name="Brinkac L.M."/>
            <person name="Bruce D."/>
            <person name="Creasy T."/>
            <person name="Daugherty S.C."/>
            <person name="Davidsen T.M."/>
            <person name="DeBoy R.T."/>
            <person name="Detter J.C."/>
            <person name="Dodson R.J."/>
            <person name="Durkin A.S."/>
            <person name="Ganapathy A."/>
            <person name="Gwinn-Giglio M."/>
            <person name="Han C.S."/>
            <person name="Khouri H."/>
            <person name="Kiss H."/>
            <person name="Kothari S.P."/>
            <person name="Madupu R."/>
            <person name="Nelson K.E."/>
            <person name="Nelson W.C."/>
            <person name="Paulsen I."/>
            <person name="Penn K."/>
            <person name="Ren Q."/>
            <person name="Rosovitz M.J."/>
            <person name="Selengut J.D."/>
            <person name="Shrivastava S."/>
            <person name="Sullivan S.A."/>
            <person name="Tapia R."/>
            <person name="Thompson L.S."/>
            <person name="Watkins K.L."/>
            <person name="Yang Q."/>
            <person name="Yu C."/>
            <person name="Zafar N."/>
            <person name="Zhou L."/>
            <person name="Kuske C.R."/>
        </authorList>
    </citation>
    <scope>NUCLEOTIDE SEQUENCE [LARGE SCALE GENOMIC DNA]</scope>
    <source>
        <strain>Ellin6076</strain>
    </source>
</reference>